<gene>
    <name type="primary">arr3</name>
</gene>
<keyword id="KW-0716">Sensory transduction</keyword>
<keyword id="KW-0844">Vision</keyword>
<feature type="chain" id="PRO_0000205206" description="Arrestin-C">
    <location>
        <begin position="1"/>
        <end position="389"/>
    </location>
</feature>
<accession>P51481</accession>
<name>ARRC_AQUCT</name>
<comment type="function">
    <text>May play a role in an as yet undefined retina-specific signal transduction. Could bind to photoactivated-phosphorylated red/green opsins.</text>
</comment>
<comment type="tissue specificity">
    <text>Retina and pineal gland.</text>
</comment>
<comment type="similarity">
    <text evidence="1">Belongs to the arrestin family.</text>
</comment>
<sequence>MADGSKVFKKTSPDGKITVYLAKRDYVDHVEFVEPVDGMIVIDPEYQKEKKVFVMMTCAFRYGRDDMELIGLSFRKDIYVQSCQVHPPLPGEKKALTPLQEKLKAKLGGNSFPFSFNMATNLPCSVTLQPGPEDSGKACGVDFEVKGFWGDDVEEKNSKKNVARLIIRKVQYAPETSGAAPHAEITKQFMMSDKPLQLEASLNKEIHYHGEPIIVNVKINNSTNKIVKKIKITVEQITDVVLYSLDKYTKVVCCEEMNDTVAANSAFTKAYQVTPLLANNREKRGLALDGKLKHGDTNLASSTTLRPGMDKEVMGILVSYKIRVNLMASRGGILGDLISSDVSVELPLILMHPKPAEGTTSAEDVVIEEFARQKLQGEQDDEEDKEEAS</sequence>
<evidence type="ECO:0000305" key="1"/>
<proteinExistence type="evidence at transcript level"/>
<reference key="1">
    <citation type="journal article" date="1995" name="Eur. J. Biochem.">
        <title>The sequence of arrestins from rod and cone photoreceptors in the frogs Rana catesbeiana and Rana pipiens. Localization of gene transcripts by reverse-transcription polymerase chain reaction on isolated photoreceptors.</title>
        <authorList>
            <person name="Abdulaeva G."/>
            <person name="Hargrave P.A."/>
            <person name="Smith W.C."/>
        </authorList>
    </citation>
    <scope>NUCLEOTIDE SEQUENCE [MRNA]</scope>
    <source>
        <tissue>Retina</tissue>
    </source>
</reference>
<protein>
    <recommendedName>
        <fullName>Arrestin-C</fullName>
    </recommendedName>
    <alternativeName>
        <fullName>Cone arrestin</fullName>
    </alternativeName>
</protein>
<organism>
    <name type="scientific">Aquarana catesbeiana</name>
    <name type="common">American bullfrog</name>
    <name type="synonym">Rana catesbeiana</name>
    <dbReference type="NCBI Taxonomy" id="8400"/>
    <lineage>
        <taxon>Eukaryota</taxon>
        <taxon>Metazoa</taxon>
        <taxon>Chordata</taxon>
        <taxon>Craniata</taxon>
        <taxon>Vertebrata</taxon>
        <taxon>Euteleostomi</taxon>
        <taxon>Amphibia</taxon>
        <taxon>Batrachia</taxon>
        <taxon>Anura</taxon>
        <taxon>Neobatrachia</taxon>
        <taxon>Ranoidea</taxon>
        <taxon>Ranidae</taxon>
        <taxon>Aquarana</taxon>
    </lineage>
</organism>
<dbReference type="EMBL" id="U30268">
    <property type="protein sequence ID" value="AAC59749.1"/>
    <property type="molecule type" value="mRNA"/>
</dbReference>
<dbReference type="EMBL" id="X92401">
    <property type="protein sequence ID" value="CAA63138.1"/>
    <property type="molecule type" value="mRNA"/>
</dbReference>
<dbReference type="PIR" id="S68175">
    <property type="entry name" value="S68175"/>
</dbReference>
<dbReference type="SMR" id="P51481"/>
<dbReference type="GO" id="GO:0001664">
    <property type="term" value="F:G protein-coupled receptor binding"/>
    <property type="evidence" value="ECO:0007669"/>
    <property type="project" value="TreeGrafter"/>
</dbReference>
<dbReference type="GO" id="GO:0002031">
    <property type="term" value="P:G protein-coupled receptor internalization"/>
    <property type="evidence" value="ECO:0007669"/>
    <property type="project" value="TreeGrafter"/>
</dbReference>
<dbReference type="GO" id="GO:0007165">
    <property type="term" value="P:signal transduction"/>
    <property type="evidence" value="ECO:0007669"/>
    <property type="project" value="InterPro"/>
</dbReference>
<dbReference type="GO" id="GO:0007601">
    <property type="term" value="P:visual perception"/>
    <property type="evidence" value="ECO:0007669"/>
    <property type="project" value="UniProtKB-KW"/>
</dbReference>
<dbReference type="FunFam" id="2.60.40.640:FF:000019">
    <property type="entry name" value="Arrestin 3"/>
    <property type="match status" value="1"/>
</dbReference>
<dbReference type="FunFam" id="2.60.40.840:FF:000002">
    <property type="entry name" value="Arrestin 3"/>
    <property type="match status" value="1"/>
</dbReference>
<dbReference type="Gene3D" id="2.60.40.640">
    <property type="match status" value="1"/>
</dbReference>
<dbReference type="Gene3D" id="2.60.40.840">
    <property type="match status" value="1"/>
</dbReference>
<dbReference type="InterPro" id="IPR000698">
    <property type="entry name" value="Arrestin"/>
</dbReference>
<dbReference type="InterPro" id="IPR014752">
    <property type="entry name" value="Arrestin-like_C"/>
</dbReference>
<dbReference type="InterPro" id="IPR011021">
    <property type="entry name" value="Arrestin-like_N"/>
</dbReference>
<dbReference type="InterPro" id="IPR011022">
    <property type="entry name" value="Arrestin_C-like"/>
</dbReference>
<dbReference type="InterPro" id="IPR017864">
    <property type="entry name" value="Arrestin_CS"/>
</dbReference>
<dbReference type="InterPro" id="IPR014753">
    <property type="entry name" value="Arrestin_N"/>
</dbReference>
<dbReference type="InterPro" id="IPR014756">
    <property type="entry name" value="Ig_E-set"/>
</dbReference>
<dbReference type="PANTHER" id="PTHR11792">
    <property type="entry name" value="ARRESTIN"/>
    <property type="match status" value="1"/>
</dbReference>
<dbReference type="PANTHER" id="PTHR11792:SF19">
    <property type="entry name" value="ARRESTIN-C"/>
    <property type="match status" value="1"/>
</dbReference>
<dbReference type="Pfam" id="PF02752">
    <property type="entry name" value="Arrestin_C"/>
    <property type="match status" value="1"/>
</dbReference>
<dbReference type="Pfam" id="PF00339">
    <property type="entry name" value="Arrestin_N"/>
    <property type="match status" value="1"/>
</dbReference>
<dbReference type="PRINTS" id="PR00309">
    <property type="entry name" value="ARRESTIN"/>
</dbReference>
<dbReference type="SMART" id="SM01017">
    <property type="entry name" value="Arrestin_C"/>
    <property type="match status" value="1"/>
</dbReference>
<dbReference type="SUPFAM" id="SSF81296">
    <property type="entry name" value="E set domains"/>
    <property type="match status" value="2"/>
</dbReference>
<dbReference type="PROSITE" id="PS00295">
    <property type="entry name" value="ARRESTINS"/>
    <property type="match status" value="1"/>
</dbReference>